<dbReference type="EMBL" id="AP009351">
    <property type="protein sequence ID" value="BAF67077.1"/>
    <property type="molecule type" value="Genomic_DNA"/>
</dbReference>
<dbReference type="RefSeq" id="WP_000395692.1">
    <property type="nucleotide sequence ID" value="NZ_JBBIAE010000002.1"/>
</dbReference>
<dbReference type="SMR" id="A6QFE5"/>
<dbReference type="GeneID" id="98345253"/>
<dbReference type="KEGG" id="sae:NWMN_0805"/>
<dbReference type="HOGENOM" id="CLU_108696_19_0_9"/>
<dbReference type="UniPathway" id="UPA00556"/>
<dbReference type="Proteomes" id="UP000006386">
    <property type="component" value="Chromosome"/>
</dbReference>
<dbReference type="GO" id="GO:0005737">
    <property type="term" value="C:cytoplasm"/>
    <property type="evidence" value="ECO:0007669"/>
    <property type="project" value="UniProtKB-SubCell"/>
</dbReference>
<dbReference type="GO" id="GO:0036370">
    <property type="term" value="F:D-alanyl carrier activity"/>
    <property type="evidence" value="ECO:0007669"/>
    <property type="project" value="UniProtKB-UniRule"/>
</dbReference>
<dbReference type="GO" id="GO:0071555">
    <property type="term" value="P:cell wall organization"/>
    <property type="evidence" value="ECO:0007669"/>
    <property type="project" value="UniProtKB-KW"/>
</dbReference>
<dbReference type="GO" id="GO:0070395">
    <property type="term" value="P:lipoteichoic acid biosynthetic process"/>
    <property type="evidence" value="ECO:0007669"/>
    <property type="project" value="UniProtKB-UniRule"/>
</dbReference>
<dbReference type="Gene3D" id="1.10.1200.10">
    <property type="entry name" value="ACP-like"/>
    <property type="match status" value="1"/>
</dbReference>
<dbReference type="HAMAP" id="MF_00565">
    <property type="entry name" value="DltC"/>
    <property type="match status" value="1"/>
</dbReference>
<dbReference type="InterPro" id="IPR036736">
    <property type="entry name" value="ACP-like_sf"/>
</dbReference>
<dbReference type="InterPro" id="IPR003230">
    <property type="entry name" value="DltC"/>
</dbReference>
<dbReference type="InterPro" id="IPR009081">
    <property type="entry name" value="PP-bd_ACP"/>
</dbReference>
<dbReference type="NCBIfam" id="TIGR01688">
    <property type="entry name" value="dltC"/>
    <property type="match status" value="1"/>
</dbReference>
<dbReference type="NCBIfam" id="NF003464">
    <property type="entry name" value="PRK05087.1"/>
    <property type="match status" value="1"/>
</dbReference>
<dbReference type="Pfam" id="PF00550">
    <property type="entry name" value="PP-binding"/>
    <property type="match status" value="1"/>
</dbReference>
<dbReference type="SUPFAM" id="SSF47336">
    <property type="entry name" value="ACP-like"/>
    <property type="match status" value="1"/>
</dbReference>
<dbReference type="PROSITE" id="PS50075">
    <property type="entry name" value="CARRIER"/>
    <property type="match status" value="1"/>
</dbReference>
<comment type="function">
    <text evidence="1">Carrier protein involved in the D-alanylation of lipoteichoic acid (LTA). The loading of thioester-linked D-alanine onto DltC is catalyzed by D-alanine--D-alanyl carrier protein ligase DltA. The DltC-carried D-alanyl group is further transferred to cell membrane phosphatidylglycerol (PG) by forming an ester bond, probably catalyzed by DltD. D-alanylation of LTA plays an important role in modulating the properties of the cell wall in Gram-positive bacteria, influencing the net charge of the cell wall.</text>
</comment>
<comment type="pathway">
    <text evidence="1">Cell wall biogenesis; lipoteichoic acid biosynthesis.</text>
</comment>
<comment type="subcellular location">
    <subcellularLocation>
        <location evidence="1">Cytoplasm</location>
    </subcellularLocation>
</comment>
<comment type="PTM">
    <text evidence="1">4'-phosphopantetheine is transferred from CoA to a specific serine of apo-DCP.</text>
</comment>
<comment type="similarity">
    <text evidence="1">Belongs to the DltC family.</text>
</comment>
<organism>
    <name type="scientific">Staphylococcus aureus (strain Newman)</name>
    <dbReference type="NCBI Taxonomy" id="426430"/>
    <lineage>
        <taxon>Bacteria</taxon>
        <taxon>Bacillati</taxon>
        <taxon>Bacillota</taxon>
        <taxon>Bacilli</taxon>
        <taxon>Bacillales</taxon>
        <taxon>Staphylococcaceae</taxon>
        <taxon>Staphylococcus</taxon>
    </lineage>
</organism>
<feature type="chain" id="PRO_1000072569" description="D-alanyl carrier protein">
    <location>
        <begin position="1"/>
        <end position="78"/>
    </location>
</feature>
<feature type="domain" description="Carrier" evidence="1">
    <location>
        <begin position="1"/>
        <end position="78"/>
    </location>
</feature>
<feature type="modified residue" description="O-(pantetheine 4'-phosphoryl)serine" evidence="1">
    <location>
        <position position="36"/>
    </location>
</feature>
<keyword id="KW-0961">Cell wall biogenesis/degradation</keyword>
<keyword id="KW-0963">Cytoplasm</keyword>
<keyword id="KW-0596">Phosphopantetheine</keyword>
<keyword id="KW-0597">Phosphoprotein</keyword>
<proteinExistence type="inferred from homology"/>
<sequence>MEFREQVLNLLAEVAENDIVKENPDVEIFEEGIIDSFQTVGLLLEIQNKLDIEVSIMDFDRDEWATPNKIVEALEELR</sequence>
<gene>
    <name evidence="1" type="primary">dltC</name>
    <name type="ordered locus">NWMN_0805</name>
</gene>
<protein>
    <recommendedName>
        <fullName evidence="1">D-alanyl carrier protein</fullName>
        <shortName evidence="1">DCP</shortName>
    </recommendedName>
    <alternativeName>
        <fullName evidence="1">D-alanine--poly(phosphoribitol) ligase subunit 2</fullName>
    </alternativeName>
</protein>
<accession>A6QFE5</accession>
<evidence type="ECO:0000255" key="1">
    <source>
        <dbReference type="HAMAP-Rule" id="MF_00565"/>
    </source>
</evidence>
<name>DLTC_STAAE</name>
<reference key="1">
    <citation type="journal article" date="2008" name="J. Bacteriol.">
        <title>Genome sequence of Staphylococcus aureus strain Newman and comparative analysis of staphylococcal genomes: polymorphism and evolution of two major pathogenicity islands.</title>
        <authorList>
            <person name="Baba T."/>
            <person name="Bae T."/>
            <person name="Schneewind O."/>
            <person name="Takeuchi F."/>
            <person name="Hiramatsu K."/>
        </authorList>
    </citation>
    <scope>NUCLEOTIDE SEQUENCE [LARGE SCALE GENOMIC DNA]</scope>
    <source>
        <strain>Newman</strain>
    </source>
</reference>